<name>SYS_STRPG</name>
<feature type="chain" id="PRO_1000019841" description="Serine--tRNA ligase">
    <location>
        <begin position="1"/>
        <end position="425"/>
    </location>
</feature>
<feature type="binding site" evidence="1">
    <location>
        <begin position="230"/>
        <end position="232"/>
    </location>
    <ligand>
        <name>L-serine</name>
        <dbReference type="ChEBI" id="CHEBI:33384"/>
    </ligand>
</feature>
<feature type="binding site" evidence="1">
    <location>
        <begin position="261"/>
        <end position="263"/>
    </location>
    <ligand>
        <name>ATP</name>
        <dbReference type="ChEBI" id="CHEBI:30616"/>
    </ligand>
</feature>
<feature type="binding site" evidence="1">
    <location>
        <position position="284"/>
    </location>
    <ligand>
        <name>L-serine</name>
        <dbReference type="ChEBI" id="CHEBI:33384"/>
    </ligand>
</feature>
<feature type="binding site" evidence="1">
    <location>
        <begin position="348"/>
        <end position="351"/>
    </location>
    <ligand>
        <name>ATP</name>
        <dbReference type="ChEBI" id="CHEBI:30616"/>
    </ligand>
</feature>
<feature type="binding site" evidence="1">
    <location>
        <position position="384"/>
    </location>
    <ligand>
        <name>L-serine</name>
        <dbReference type="ChEBI" id="CHEBI:33384"/>
    </ligand>
</feature>
<comment type="function">
    <text evidence="1">Catalyzes the attachment of serine to tRNA(Ser). Is also able to aminoacylate tRNA(Sec) with serine, to form the misacylated tRNA L-seryl-tRNA(Sec), which will be further converted into selenocysteinyl-tRNA(Sec).</text>
</comment>
<comment type="catalytic activity">
    <reaction evidence="1">
        <text>tRNA(Ser) + L-serine + ATP = L-seryl-tRNA(Ser) + AMP + diphosphate + H(+)</text>
        <dbReference type="Rhea" id="RHEA:12292"/>
        <dbReference type="Rhea" id="RHEA-COMP:9669"/>
        <dbReference type="Rhea" id="RHEA-COMP:9703"/>
        <dbReference type="ChEBI" id="CHEBI:15378"/>
        <dbReference type="ChEBI" id="CHEBI:30616"/>
        <dbReference type="ChEBI" id="CHEBI:33019"/>
        <dbReference type="ChEBI" id="CHEBI:33384"/>
        <dbReference type="ChEBI" id="CHEBI:78442"/>
        <dbReference type="ChEBI" id="CHEBI:78533"/>
        <dbReference type="ChEBI" id="CHEBI:456215"/>
        <dbReference type="EC" id="6.1.1.11"/>
    </reaction>
</comment>
<comment type="catalytic activity">
    <reaction evidence="1">
        <text>tRNA(Sec) + L-serine + ATP = L-seryl-tRNA(Sec) + AMP + diphosphate + H(+)</text>
        <dbReference type="Rhea" id="RHEA:42580"/>
        <dbReference type="Rhea" id="RHEA-COMP:9742"/>
        <dbReference type="Rhea" id="RHEA-COMP:10128"/>
        <dbReference type="ChEBI" id="CHEBI:15378"/>
        <dbReference type="ChEBI" id="CHEBI:30616"/>
        <dbReference type="ChEBI" id="CHEBI:33019"/>
        <dbReference type="ChEBI" id="CHEBI:33384"/>
        <dbReference type="ChEBI" id="CHEBI:78442"/>
        <dbReference type="ChEBI" id="CHEBI:78533"/>
        <dbReference type="ChEBI" id="CHEBI:456215"/>
        <dbReference type="EC" id="6.1.1.11"/>
    </reaction>
</comment>
<comment type="pathway">
    <text evidence="1">Aminoacyl-tRNA biosynthesis; selenocysteinyl-tRNA(Sec) biosynthesis; L-seryl-tRNA(Sec) from L-serine and tRNA(Sec): step 1/1.</text>
</comment>
<comment type="subunit">
    <text evidence="1">Homodimer. The tRNA molecule binds across the dimer.</text>
</comment>
<comment type="subcellular location">
    <subcellularLocation>
        <location evidence="1">Cytoplasm</location>
    </subcellularLocation>
</comment>
<comment type="domain">
    <text evidence="1">Consists of two distinct domains, a catalytic core and a N-terminal extension that is involved in tRNA binding.</text>
</comment>
<comment type="similarity">
    <text evidence="1">Belongs to the class-II aminoacyl-tRNA synthetase family. Type-1 seryl-tRNA synthetase subfamily.</text>
</comment>
<accession>A2RCY1</accession>
<reference key="1">
    <citation type="journal article" date="2007" name="J. Bacteriol.">
        <title>Complete genome of acute rheumatic fever-associated serotype M5 Streptococcus pyogenes strain Manfredo.</title>
        <authorList>
            <person name="Holden M.T.G."/>
            <person name="Scott A."/>
            <person name="Cherevach I."/>
            <person name="Chillingworth T."/>
            <person name="Churcher C."/>
            <person name="Cronin A."/>
            <person name="Dowd L."/>
            <person name="Feltwell T."/>
            <person name="Hamlin N."/>
            <person name="Holroyd S."/>
            <person name="Jagels K."/>
            <person name="Moule S."/>
            <person name="Mungall K."/>
            <person name="Quail M.A."/>
            <person name="Price C."/>
            <person name="Rabbinowitsch E."/>
            <person name="Sharp S."/>
            <person name="Skelton J."/>
            <person name="Whitehead S."/>
            <person name="Barrell B.G."/>
            <person name="Kehoe M."/>
            <person name="Parkhill J."/>
        </authorList>
    </citation>
    <scope>NUCLEOTIDE SEQUENCE [LARGE SCALE GENOMIC DNA]</scope>
    <source>
        <strain>Manfredo</strain>
    </source>
</reference>
<proteinExistence type="inferred from homology"/>
<evidence type="ECO:0000255" key="1">
    <source>
        <dbReference type="HAMAP-Rule" id="MF_00176"/>
    </source>
</evidence>
<dbReference type="EC" id="6.1.1.11" evidence="1"/>
<dbReference type="EMBL" id="AM295007">
    <property type="protein sequence ID" value="CAM29704.1"/>
    <property type="molecule type" value="Genomic_DNA"/>
</dbReference>
<dbReference type="RefSeq" id="WP_011888639.1">
    <property type="nucleotide sequence ID" value="NC_009332.1"/>
</dbReference>
<dbReference type="SMR" id="A2RCY1"/>
<dbReference type="KEGG" id="spf:SpyM50362"/>
<dbReference type="HOGENOM" id="CLU_023797_1_1_9"/>
<dbReference type="UniPathway" id="UPA00906">
    <property type="reaction ID" value="UER00895"/>
</dbReference>
<dbReference type="GO" id="GO:0005737">
    <property type="term" value="C:cytoplasm"/>
    <property type="evidence" value="ECO:0007669"/>
    <property type="project" value="UniProtKB-SubCell"/>
</dbReference>
<dbReference type="GO" id="GO:0005524">
    <property type="term" value="F:ATP binding"/>
    <property type="evidence" value="ECO:0007669"/>
    <property type="project" value="UniProtKB-UniRule"/>
</dbReference>
<dbReference type="GO" id="GO:0140096">
    <property type="term" value="F:catalytic activity, acting on a protein"/>
    <property type="evidence" value="ECO:0007669"/>
    <property type="project" value="UniProtKB-ARBA"/>
</dbReference>
<dbReference type="GO" id="GO:0004828">
    <property type="term" value="F:serine-tRNA ligase activity"/>
    <property type="evidence" value="ECO:0007669"/>
    <property type="project" value="UniProtKB-UniRule"/>
</dbReference>
<dbReference type="GO" id="GO:0016740">
    <property type="term" value="F:transferase activity"/>
    <property type="evidence" value="ECO:0007669"/>
    <property type="project" value="UniProtKB-ARBA"/>
</dbReference>
<dbReference type="GO" id="GO:0016260">
    <property type="term" value="P:selenocysteine biosynthetic process"/>
    <property type="evidence" value="ECO:0007669"/>
    <property type="project" value="UniProtKB-UniRule"/>
</dbReference>
<dbReference type="GO" id="GO:0006434">
    <property type="term" value="P:seryl-tRNA aminoacylation"/>
    <property type="evidence" value="ECO:0007669"/>
    <property type="project" value="UniProtKB-UniRule"/>
</dbReference>
<dbReference type="CDD" id="cd00770">
    <property type="entry name" value="SerRS_core"/>
    <property type="match status" value="1"/>
</dbReference>
<dbReference type="Gene3D" id="3.30.930.10">
    <property type="entry name" value="Bira Bifunctional Protein, Domain 2"/>
    <property type="match status" value="1"/>
</dbReference>
<dbReference type="Gene3D" id="1.10.287.40">
    <property type="entry name" value="Serine-tRNA synthetase, tRNA binding domain"/>
    <property type="match status" value="1"/>
</dbReference>
<dbReference type="HAMAP" id="MF_00176">
    <property type="entry name" value="Ser_tRNA_synth_type1"/>
    <property type="match status" value="1"/>
</dbReference>
<dbReference type="InterPro" id="IPR002314">
    <property type="entry name" value="aa-tRNA-synt_IIb"/>
</dbReference>
<dbReference type="InterPro" id="IPR006195">
    <property type="entry name" value="aa-tRNA-synth_II"/>
</dbReference>
<dbReference type="InterPro" id="IPR045864">
    <property type="entry name" value="aa-tRNA-synth_II/BPL/LPL"/>
</dbReference>
<dbReference type="InterPro" id="IPR002317">
    <property type="entry name" value="Ser-tRNA-ligase_type_1"/>
</dbReference>
<dbReference type="InterPro" id="IPR015866">
    <property type="entry name" value="Ser-tRNA-synth_1_N"/>
</dbReference>
<dbReference type="InterPro" id="IPR042103">
    <property type="entry name" value="SerRS_1_N_sf"/>
</dbReference>
<dbReference type="InterPro" id="IPR033729">
    <property type="entry name" value="SerRS_core"/>
</dbReference>
<dbReference type="InterPro" id="IPR010978">
    <property type="entry name" value="tRNA-bd_arm"/>
</dbReference>
<dbReference type="NCBIfam" id="TIGR00414">
    <property type="entry name" value="serS"/>
    <property type="match status" value="1"/>
</dbReference>
<dbReference type="PANTHER" id="PTHR43697:SF1">
    <property type="entry name" value="SERINE--TRNA LIGASE"/>
    <property type="match status" value="1"/>
</dbReference>
<dbReference type="PANTHER" id="PTHR43697">
    <property type="entry name" value="SERYL-TRNA SYNTHETASE"/>
    <property type="match status" value="1"/>
</dbReference>
<dbReference type="Pfam" id="PF02403">
    <property type="entry name" value="Seryl_tRNA_N"/>
    <property type="match status" value="1"/>
</dbReference>
<dbReference type="Pfam" id="PF00587">
    <property type="entry name" value="tRNA-synt_2b"/>
    <property type="match status" value="1"/>
</dbReference>
<dbReference type="PIRSF" id="PIRSF001529">
    <property type="entry name" value="Ser-tRNA-synth_IIa"/>
    <property type="match status" value="1"/>
</dbReference>
<dbReference type="PRINTS" id="PR00981">
    <property type="entry name" value="TRNASYNTHSER"/>
</dbReference>
<dbReference type="SUPFAM" id="SSF55681">
    <property type="entry name" value="Class II aaRS and biotin synthetases"/>
    <property type="match status" value="1"/>
</dbReference>
<dbReference type="SUPFAM" id="SSF46589">
    <property type="entry name" value="tRNA-binding arm"/>
    <property type="match status" value="1"/>
</dbReference>
<dbReference type="PROSITE" id="PS50862">
    <property type="entry name" value="AA_TRNA_LIGASE_II"/>
    <property type="match status" value="1"/>
</dbReference>
<organism>
    <name type="scientific">Streptococcus pyogenes serotype M5 (strain Manfredo)</name>
    <dbReference type="NCBI Taxonomy" id="160491"/>
    <lineage>
        <taxon>Bacteria</taxon>
        <taxon>Bacillati</taxon>
        <taxon>Bacillota</taxon>
        <taxon>Bacilli</taxon>
        <taxon>Lactobacillales</taxon>
        <taxon>Streptococcaceae</taxon>
        <taxon>Streptococcus</taxon>
    </lineage>
</organism>
<sequence>MLDLKRIRTDFDTVAAKLKNRGVSEDTLTHLKELDEKRRTLLVQSEELKAERNIASAAIAQAKRQKEDATQQIADMQKVSADIKTIDNQLVAIDQQVADIITVLPNTPHDSVPVGADEEDNVEIRRWGTPRDFDFEVKAHWDLGEDLDILDWERGAKVTGARFLFYKNLGARLERALYNFMLDEHIKEGYQEIITPYMVNHDSMFGTGQYPKFKEDTFELADTNFVLIPTAEVPLTNYYRGEILDGKELPIYFTAMSPSFRSEAGSAGRDTRGLIRLHQFHKVEMVKFAKSEESYQELEKMTANAENILQKLGLPYRVISLCTGDMGFSAAKTYDLEVWIPAQNTYREISSCSNTEDFQARRAQIRYRDEADGKVKLLHTLNGSGLAVGRTVAAILENYQNEDGSVTIPEVLRPYMGGETVISPK</sequence>
<gene>
    <name evidence="1" type="primary">serS</name>
    <name type="ordered locus">SpyM50362</name>
</gene>
<keyword id="KW-0030">Aminoacyl-tRNA synthetase</keyword>
<keyword id="KW-0067">ATP-binding</keyword>
<keyword id="KW-0963">Cytoplasm</keyword>
<keyword id="KW-0436">Ligase</keyword>
<keyword id="KW-0547">Nucleotide-binding</keyword>
<keyword id="KW-0648">Protein biosynthesis</keyword>
<protein>
    <recommendedName>
        <fullName evidence="1">Serine--tRNA ligase</fullName>
        <ecNumber evidence="1">6.1.1.11</ecNumber>
    </recommendedName>
    <alternativeName>
        <fullName evidence="1">Seryl-tRNA synthetase</fullName>
        <shortName evidence="1">SerRS</shortName>
    </alternativeName>
    <alternativeName>
        <fullName evidence="1">Seryl-tRNA(Ser/Sec) synthetase</fullName>
    </alternativeName>
</protein>